<feature type="chain" id="PRO_0000115162" description="DNA mismatch repair protein MutS">
    <location>
        <begin position="1"/>
        <end position="891"/>
    </location>
</feature>
<feature type="region of interest" description="Disordered" evidence="2">
    <location>
        <begin position="827"/>
        <end position="854"/>
    </location>
</feature>
<feature type="binding site" evidence="1">
    <location>
        <begin position="639"/>
        <end position="646"/>
    </location>
    <ligand>
        <name>ATP</name>
        <dbReference type="ChEBI" id="CHEBI:30616"/>
    </ligand>
</feature>
<protein>
    <recommendedName>
        <fullName evidence="1">DNA mismatch repair protein MutS</fullName>
    </recommendedName>
</protein>
<organism>
    <name type="scientific">Treponema denticola (strain ATCC 35405 / DSM 14222 / CIP 103919 / JCM 8153 / KCTC 15104)</name>
    <dbReference type="NCBI Taxonomy" id="243275"/>
    <lineage>
        <taxon>Bacteria</taxon>
        <taxon>Pseudomonadati</taxon>
        <taxon>Spirochaetota</taxon>
        <taxon>Spirochaetia</taxon>
        <taxon>Spirochaetales</taxon>
        <taxon>Treponemataceae</taxon>
        <taxon>Treponema</taxon>
    </lineage>
</organism>
<gene>
    <name evidence="1" type="primary">mutS</name>
    <name type="ordered locus">TDE_2603</name>
</gene>
<evidence type="ECO:0000255" key="1">
    <source>
        <dbReference type="HAMAP-Rule" id="MF_00096"/>
    </source>
</evidence>
<evidence type="ECO:0000256" key="2">
    <source>
        <dbReference type="SAM" id="MobiDB-lite"/>
    </source>
</evidence>
<keyword id="KW-0067">ATP-binding</keyword>
<keyword id="KW-0227">DNA damage</keyword>
<keyword id="KW-0234">DNA repair</keyword>
<keyword id="KW-0238">DNA-binding</keyword>
<keyword id="KW-0547">Nucleotide-binding</keyword>
<keyword id="KW-1185">Reference proteome</keyword>
<dbReference type="EMBL" id="AE017226">
    <property type="protein sequence ID" value="AAS13120.1"/>
    <property type="molecule type" value="Genomic_DNA"/>
</dbReference>
<dbReference type="RefSeq" id="NP_973201.1">
    <property type="nucleotide sequence ID" value="NC_002967.9"/>
</dbReference>
<dbReference type="SMR" id="P61672"/>
<dbReference type="STRING" id="243275.TDE_2603"/>
<dbReference type="PaxDb" id="243275-TDE_2603"/>
<dbReference type="KEGG" id="tde:TDE_2603"/>
<dbReference type="PATRIC" id="fig|243275.7.peg.2461"/>
<dbReference type="eggNOG" id="COG0249">
    <property type="taxonomic scope" value="Bacteria"/>
</dbReference>
<dbReference type="HOGENOM" id="CLU_002472_3_1_12"/>
<dbReference type="OrthoDB" id="9802448at2"/>
<dbReference type="Proteomes" id="UP000008212">
    <property type="component" value="Chromosome"/>
</dbReference>
<dbReference type="GO" id="GO:0005829">
    <property type="term" value="C:cytosol"/>
    <property type="evidence" value="ECO:0007669"/>
    <property type="project" value="TreeGrafter"/>
</dbReference>
<dbReference type="GO" id="GO:0005524">
    <property type="term" value="F:ATP binding"/>
    <property type="evidence" value="ECO:0007669"/>
    <property type="project" value="UniProtKB-UniRule"/>
</dbReference>
<dbReference type="GO" id="GO:0140664">
    <property type="term" value="F:ATP-dependent DNA damage sensor activity"/>
    <property type="evidence" value="ECO:0007669"/>
    <property type="project" value="InterPro"/>
</dbReference>
<dbReference type="GO" id="GO:0003684">
    <property type="term" value="F:damaged DNA binding"/>
    <property type="evidence" value="ECO:0007669"/>
    <property type="project" value="UniProtKB-UniRule"/>
</dbReference>
<dbReference type="GO" id="GO:0030983">
    <property type="term" value="F:mismatched DNA binding"/>
    <property type="evidence" value="ECO:0007669"/>
    <property type="project" value="InterPro"/>
</dbReference>
<dbReference type="GO" id="GO:0006298">
    <property type="term" value="P:mismatch repair"/>
    <property type="evidence" value="ECO:0007669"/>
    <property type="project" value="UniProtKB-UniRule"/>
</dbReference>
<dbReference type="Gene3D" id="1.10.1420.10">
    <property type="match status" value="2"/>
</dbReference>
<dbReference type="Gene3D" id="3.40.1170.10">
    <property type="entry name" value="DNA repair protein MutS, domain I"/>
    <property type="match status" value="1"/>
</dbReference>
<dbReference type="Gene3D" id="3.30.420.110">
    <property type="entry name" value="MutS, connector domain"/>
    <property type="match status" value="1"/>
</dbReference>
<dbReference type="Gene3D" id="3.40.50.300">
    <property type="entry name" value="P-loop containing nucleotide triphosphate hydrolases"/>
    <property type="match status" value="1"/>
</dbReference>
<dbReference type="HAMAP" id="MF_00096">
    <property type="entry name" value="MutS"/>
    <property type="match status" value="1"/>
</dbReference>
<dbReference type="InterPro" id="IPR005748">
    <property type="entry name" value="DNA_mismatch_repair_MutS"/>
</dbReference>
<dbReference type="InterPro" id="IPR007695">
    <property type="entry name" value="DNA_mismatch_repair_MutS-lik_N"/>
</dbReference>
<dbReference type="InterPro" id="IPR017261">
    <property type="entry name" value="DNA_mismatch_repair_MutS/MSH"/>
</dbReference>
<dbReference type="InterPro" id="IPR000432">
    <property type="entry name" value="DNA_mismatch_repair_MutS_C"/>
</dbReference>
<dbReference type="InterPro" id="IPR007861">
    <property type="entry name" value="DNA_mismatch_repair_MutS_clamp"/>
</dbReference>
<dbReference type="InterPro" id="IPR007696">
    <property type="entry name" value="DNA_mismatch_repair_MutS_core"/>
</dbReference>
<dbReference type="InterPro" id="IPR016151">
    <property type="entry name" value="DNA_mismatch_repair_MutS_N"/>
</dbReference>
<dbReference type="InterPro" id="IPR036187">
    <property type="entry name" value="DNA_mismatch_repair_MutS_sf"/>
</dbReference>
<dbReference type="InterPro" id="IPR007860">
    <property type="entry name" value="DNA_mmatch_repair_MutS_con_dom"/>
</dbReference>
<dbReference type="InterPro" id="IPR045076">
    <property type="entry name" value="MutS"/>
</dbReference>
<dbReference type="InterPro" id="IPR036678">
    <property type="entry name" value="MutS_con_dom_sf"/>
</dbReference>
<dbReference type="InterPro" id="IPR027417">
    <property type="entry name" value="P-loop_NTPase"/>
</dbReference>
<dbReference type="NCBIfam" id="TIGR01070">
    <property type="entry name" value="mutS1"/>
    <property type="match status" value="1"/>
</dbReference>
<dbReference type="NCBIfam" id="NF003810">
    <property type="entry name" value="PRK05399.1"/>
    <property type="match status" value="1"/>
</dbReference>
<dbReference type="PANTHER" id="PTHR11361:SF34">
    <property type="entry name" value="DNA MISMATCH REPAIR PROTEIN MSH1, MITOCHONDRIAL"/>
    <property type="match status" value="1"/>
</dbReference>
<dbReference type="PANTHER" id="PTHR11361">
    <property type="entry name" value="DNA MISMATCH REPAIR PROTEIN MUTS FAMILY MEMBER"/>
    <property type="match status" value="1"/>
</dbReference>
<dbReference type="Pfam" id="PF01624">
    <property type="entry name" value="MutS_I"/>
    <property type="match status" value="1"/>
</dbReference>
<dbReference type="Pfam" id="PF05188">
    <property type="entry name" value="MutS_II"/>
    <property type="match status" value="1"/>
</dbReference>
<dbReference type="Pfam" id="PF05192">
    <property type="entry name" value="MutS_III"/>
    <property type="match status" value="1"/>
</dbReference>
<dbReference type="Pfam" id="PF05190">
    <property type="entry name" value="MutS_IV"/>
    <property type="match status" value="1"/>
</dbReference>
<dbReference type="Pfam" id="PF00488">
    <property type="entry name" value="MutS_V"/>
    <property type="match status" value="1"/>
</dbReference>
<dbReference type="PIRSF" id="PIRSF037677">
    <property type="entry name" value="DNA_mis_repair_Msh6"/>
    <property type="match status" value="1"/>
</dbReference>
<dbReference type="SMART" id="SM00534">
    <property type="entry name" value="MUTSac"/>
    <property type="match status" value="1"/>
</dbReference>
<dbReference type="SMART" id="SM00533">
    <property type="entry name" value="MUTSd"/>
    <property type="match status" value="1"/>
</dbReference>
<dbReference type="SUPFAM" id="SSF55271">
    <property type="entry name" value="DNA repair protein MutS, domain I"/>
    <property type="match status" value="1"/>
</dbReference>
<dbReference type="SUPFAM" id="SSF53150">
    <property type="entry name" value="DNA repair protein MutS, domain II"/>
    <property type="match status" value="1"/>
</dbReference>
<dbReference type="SUPFAM" id="SSF48334">
    <property type="entry name" value="DNA repair protein MutS, domain III"/>
    <property type="match status" value="1"/>
</dbReference>
<dbReference type="SUPFAM" id="SSF52540">
    <property type="entry name" value="P-loop containing nucleoside triphosphate hydrolases"/>
    <property type="match status" value="1"/>
</dbReference>
<dbReference type="PROSITE" id="PS00486">
    <property type="entry name" value="DNA_MISMATCH_REPAIR_2"/>
    <property type="match status" value="1"/>
</dbReference>
<reference key="1">
    <citation type="journal article" date="2004" name="Proc. Natl. Acad. Sci. U.S.A.">
        <title>Comparison of the genome of the oral pathogen Treponema denticola with other spirochete genomes.</title>
        <authorList>
            <person name="Seshadri R."/>
            <person name="Myers G.S.A."/>
            <person name="Tettelin H."/>
            <person name="Eisen J.A."/>
            <person name="Heidelberg J.F."/>
            <person name="Dodson R.J."/>
            <person name="Davidsen T.M."/>
            <person name="DeBoy R.T."/>
            <person name="Fouts D.E."/>
            <person name="Haft D.H."/>
            <person name="Selengut J."/>
            <person name="Ren Q."/>
            <person name="Brinkac L.M."/>
            <person name="Madupu R."/>
            <person name="Kolonay J.F."/>
            <person name="Durkin S.A."/>
            <person name="Daugherty S.C."/>
            <person name="Shetty J."/>
            <person name="Shvartsbeyn A."/>
            <person name="Gebregeorgis E."/>
            <person name="Geer K."/>
            <person name="Tsegaye G."/>
            <person name="Malek J.A."/>
            <person name="Ayodeji B."/>
            <person name="Shatsman S."/>
            <person name="McLeod M.P."/>
            <person name="Smajs D."/>
            <person name="Howell J.K."/>
            <person name="Pal S."/>
            <person name="Amin A."/>
            <person name="Vashisth P."/>
            <person name="McNeill T.Z."/>
            <person name="Xiang Q."/>
            <person name="Sodergren E."/>
            <person name="Baca E."/>
            <person name="Weinstock G.M."/>
            <person name="Norris S.J."/>
            <person name="Fraser C.M."/>
            <person name="Paulsen I.T."/>
        </authorList>
    </citation>
    <scope>NUCLEOTIDE SEQUENCE [LARGE SCALE GENOMIC DNA]</scope>
    <source>
        <strain>ATCC 35405 / DSM 14222 / CIP 103919 / JCM 8153 / KCTC 15104</strain>
    </source>
</reference>
<proteinExistence type="inferred from homology"/>
<comment type="function">
    <text evidence="1">This protein is involved in the repair of mismatches in DNA. It is possible that it carries out the mismatch recognition step. This protein has a weak ATPase activity.</text>
</comment>
<comment type="similarity">
    <text evidence="1">Belongs to the DNA mismatch repair MutS family.</text>
</comment>
<sequence>MNKPQTPMMRQYLSIKAKYKDEILFFRLGDFYEMFFDEAVEVSRILNLTLTKRNDVPMCGIPYHAAKIYIARLLRAGKKIAICEQVTEPVAGGLTERKVVEVITPGTVAEDDFLEQGSNNYLAAVYCSNKKTEGNSGFDYYAGLAYIDVTTGNFFATSFPKTDFKEQFLKEIGRINPKEILIQQSIQNEFPALKQILSEFPSMMQNFYPDWSFNPDQAEKRLCSTFGTENLKGFLLNTDSPEVPPAGLLLQYLEEISGRDISHISGIKIYAESDFVSLDDSTRKNLELLTNLRDNSPSYSLFESVNYTKTAMGTRLLRRRISYPLRSKNEIDKRLDKVNSLFKDGKASAIIRETLSSILDIERLSGRIAMQKTHGKDLLALKQSLNSVIRMGSLIEEKKLNFLQLNDEEKKLLTEIRDLLENSIDDDCTIALNDGKLIKKGFSKKVDTIKNIKENAHEILEKYLDDERKKTGINNLKIKYNRMMGYFLEVSLGNISAVPDYFIRQRSLSNADRFTTESLKQIEDNINNSEERLIEAEKEVFDEVCTEIGSHHCFLQKLAEEVAELDVNQSFAQAAVLHAWTRPELCSDSGILNITGGRHPVVENHLRAGDFVPNSIKLLSGENSNPEDETIPSFAVITGPNMAGKSTFLRQTALICLLAQIGSFVPAEKAVLSPVDKIFCRVGATDNLARGESTFLVEMIETAYILNSATRNSLVIMDEVGRGTSMEDGLAIAQAVSEHLLNTIKAKTLFATHYHELTRLEHEKIINLKLDVLEAEGKIVFLKKVVHGAAGNSYGIHVAGLAGIPQSVLTRAENLLYMRSQFQKERTIQEARPSAQGSEEKTPSSPAEKGLSLFPEEELILNEILSTDPDETAPIKALQLIASWKNRLSGK</sequence>
<name>MUTS_TREDE</name>
<accession>P61672</accession>